<keyword id="KW-0880">Kelch repeat</keyword>
<keyword id="KW-1185">Reference proteome</keyword>
<keyword id="KW-0677">Repeat</keyword>
<reference key="1">
    <citation type="journal article" date="2000" name="Nature">
        <title>Sequence and analysis of chromosome 1 of the plant Arabidopsis thaliana.</title>
        <authorList>
            <person name="Theologis A."/>
            <person name="Ecker J.R."/>
            <person name="Palm C.J."/>
            <person name="Federspiel N.A."/>
            <person name="Kaul S."/>
            <person name="White O."/>
            <person name="Alonso J."/>
            <person name="Altafi H."/>
            <person name="Araujo R."/>
            <person name="Bowman C.L."/>
            <person name="Brooks S.Y."/>
            <person name="Buehler E."/>
            <person name="Chan A."/>
            <person name="Chao Q."/>
            <person name="Chen H."/>
            <person name="Cheuk R.F."/>
            <person name="Chin C.W."/>
            <person name="Chung M.K."/>
            <person name="Conn L."/>
            <person name="Conway A.B."/>
            <person name="Conway A.R."/>
            <person name="Creasy T.H."/>
            <person name="Dewar K."/>
            <person name="Dunn P."/>
            <person name="Etgu P."/>
            <person name="Feldblyum T.V."/>
            <person name="Feng J.-D."/>
            <person name="Fong B."/>
            <person name="Fujii C.Y."/>
            <person name="Gill J.E."/>
            <person name="Goldsmith A.D."/>
            <person name="Haas B."/>
            <person name="Hansen N.F."/>
            <person name="Hughes B."/>
            <person name="Huizar L."/>
            <person name="Hunter J.L."/>
            <person name="Jenkins J."/>
            <person name="Johnson-Hopson C."/>
            <person name="Khan S."/>
            <person name="Khaykin E."/>
            <person name="Kim C.J."/>
            <person name="Koo H.L."/>
            <person name="Kremenetskaia I."/>
            <person name="Kurtz D.B."/>
            <person name="Kwan A."/>
            <person name="Lam B."/>
            <person name="Langin-Hooper S."/>
            <person name="Lee A."/>
            <person name="Lee J.M."/>
            <person name="Lenz C.A."/>
            <person name="Li J.H."/>
            <person name="Li Y.-P."/>
            <person name="Lin X."/>
            <person name="Liu S.X."/>
            <person name="Liu Z.A."/>
            <person name="Luros J.S."/>
            <person name="Maiti R."/>
            <person name="Marziali A."/>
            <person name="Militscher J."/>
            <person name="Miranda M."/>
            <person name="Nguyen M."/>
            <person name="Nierman W.C."/>
            <person name="Osborne B.I."/>
            <person name="Pai G."/>
            <person name="Peterson J."/>
            <person name="Pham P.K."/>
            <person name="Rizzo M."/>
            <person name="Rooney T."/>
            <person name="Rowley D."/>
            <person name="Sakano H."/>
            <person name="Salzberg S.L."/>
            <person name="Schwartz J.R."/>
            <person name="Shinn P."/>
            <person name="Southwick A.M."/>
            <person name="Sun H."/>
            <person name="Tallon L.J."/>
            <person name="Tambunga G."/>
            <person name="Toriumi M.J."/>
            <person name="Town C.D."/>
            <person name="Utterback T."/>
            <person name="Van Aken S."/>
            <person name="Vaysberg M."/>
            <person name="Vysotskaia V.S."/>
            <person name="Walker M."/>
            <person name="Wu D."/>
            <person name="Yu G."/>
            <person name="Fraser C.M."/>
            <person name="Venter J.C."/>
            <person name="Davis R.W."/>
        </authorList>
    </citation>
    <scope>NUCLEOTIDE SEQUENCE [LARGE SCALE GENOMIC DNA]</scope>
    <source>
        <strain>cv. Columbia</strain>
    </source>
</reference>
<reference key="2">
    <citation type="journal article" date="2017" name="Plant J.">
        <title>Araport11: a complete reannotation of the Arabidopsis thaliana reference genome.</title>
        <authorList>
            <person name="Cheng C.Y."/>
            <person name="Krishnakumar V."/>
            <person name="Chan A.P."/>
            <person name="Thibaud-Nissen F."/>
            <person name="Schobel S."/>
            <person name="Town C.D."/>
        </authorList>
    </citation>
    <scope>GENOME REANNOTATION</scope>
    <source>
        <strain>cv. Columbia</strain>
    </source>
</reference>
<reference key="3">
    <citation type="journal article" date="2003" name="Science">
        <title>Empirical analysis of transcriptional activity in the Arabidopsis genome.</title>
        <authorList>
            <person name="Yamada K."/>
            <person name="Lim J."/>
            <person name="Dale J.M."/>
            <person name="Chen H."/>
            <person name="Shinn P."/>
            <person name="Palm C.J."/>
            <person name="Southwick A.M."/>
            <person name="Wu H.C."/>
            <person name="Kim C.J."/>
            <person name="Nguyen M."/>
            <person name="Pham P.K."/>
            <person name="Cheuk R.F."/>
            <person name="Karlin-Newmann G."/>
            <person name="Liu S.X."/>
            <person name="Lam B."/>
            <person name="Sakano H."/>
            <person name="Wu T."/>
            <person name="Yu G."/>
            <person name="Miranda M."/>
            <person name="Quach H.L."/>
            <person name="Tripp M."/>
            <person name="Chang C.H."/>
            <person name="Lee J.M."/>
            <person name="Toriumi M.J."/>
            <person name="Chan M.M."/>
            <person name="Tang C.C."/>
            <person name="Onodera C.S."/>
            <person name="Deng J.M."/>
            <person name="Akiyama K."/>
            <person name="Ansari Y."/>
            <person name="Arakawa T."/>
            <person name="Banh J."/>
            <person name="Banno F."/>
            <person name="Bowser L."/>
            <person name="Brooks S.Y."/>
            <person name="Carninci P."/>
            <person name="Chao Q."/>
            <person name="Choy N."/>
            <person name="Enju A."/>
            <person name="Goldsmith A.D."/>
            <person name="Gurjal M."/>
            <person name="Hansen N.F."/>
            <person name="Hayashizaki Y."/>
            <person name="Johnson-Hopson C."/>
            <person name="Hsuan V.W."/>
            <person name="Iida K."/>
            <person name="Karnes M."/>
            <person name="Khan S."/>
            <person name="Koesema E."/>
            <person name="Ishida J."/>
            <person name="Jiang P.X."/>
            <person name="Jones T."/>
            <person name="Kawai J."/>
            <person name="Kamiya A."/>
            <person name="Meyers C."/>
            <person name="Nakajima M."/>
            <person name="Narusaka M."/>
            <person name="Seki M."/>
            <person name="Sakurai T."/>
            <person name="Satou M."/>
            <person name="Tamse R."/>
            <person name="Vaysberg M."/>
            <person name="Wallender E.K."/>
            <person name="Wong C."/>
            <person name="Yamamura Y."/>
            <person name="Yuan S."/>
            <person name="Shinozaki K."/>
            <person name="Davis R.W."/>
            <person name="Theologis A."/>
            <person name="Ecker J.R."/>
        </authorList>
    </citation>
    <scope>NUCLEOTIDE SEQUENCE [LARGE SCALE MRNA]</scope>
    <source>
        <strain>cv. Columbia</strain>
    </source>
</reference>
<reference key="4">
    <citation type="submission" date="2006-07" db="EMBL/GenBank/DDBJ databases">
        <title>Large-scale analysis of RIKEN Arabidopsis full-length (RAFL) cDNAs.</title>
        <authorList>
            <person name="Totoki Y."/>
            <person name="Seki M."/>
            <person name="Ishida J."/>
            <person name="Nakajima M."/>
            <person name="Enju A."/>
            <person name="Kamiya A."/>
            <person name="Narusaka M."/>
            <person name="Shin-i T."/>
            <person name="Nakagawa M."/>
            <person name="Sakamoto N."/>
            <person name="Oishi K."/>
            <person name="Kohara Y."/>
            <person name="Kobayashi M."/>
            <person name="Toyoda A."/>
            <person name="Sakaki Y."/>
            <person name="Sakurai T."/>
            <person name="Iida K."/>
            <person name="Akiyama K."/>
            <person name="Satou M."/>
            <person name="Toyoda T."/>
            <person name="Konagaya A."/>
            <person name="Carninci P."/>
            <person name="Kawai J."/>
            <person name="Hayashizaki Y."/>
            <person name="Shinozaki K."/>
        </authorList>
    </citation>
    <scope>NUCLEOTIDE SEQUENCE [LARGE SCALE MRNA]</scope>
    <source>
        <strain>cv. Columbia</strain>
    </source>
</reference>
<name>FBK15_ARATH</name>
<comment type="sequence caution" evidence="2">
    <conflict type="erroneous initiation">
        <sequence resource="EMBL-CDS" id="AAD14499"/>
    </conflict>
</comment>
<dbReference type="EMBL" id="AC005508">
    <property type="protein sequence ID" value="AAD14499.1"/>
    <property type="status" value="ALT_INIT"/>
    <property type="molecule type" value="Genomic_DNA"/>
</dbReference>
<dbReference type="EMBL" id="CP002684">
    <property type="protein sequence ID" value="AEE30761.1"/>
    <property type="molecule type" value="Genomic_DNA"/>
</dbReference>
<dbReference type="EMBL" id="BT006467">
    <property type="protein sequence ID" value="AAP21275.1"/>
    <property type="molecule type" value="mRNA"/>
</dbReference>
<dbReference type="EMBL" id="AK227412">
    <property type="protein sequence ID" value="BAE99416.1"/>
    <property type="molecule type" value="mRNA"/>
</dbReference>
<dbReference type="PIR" id="C86396">
    <property type="entry name" value="C86396"/>
</dbReference>
<dbReference type="RefSeq" id="NP_174015.2">
    <property type="nucleotide sequence ID" value="NM_102457.6"/>
</dbReference>
<dbReference type="SMR" id="Q84M94"/>
<dbReference type="BioGRID" id="24818">
    <property type="interactions" value="2"/>
</dbReference>
<dbReference type="IntAct" id="Q84M94">
    <property type="interactions" value="2"/>
</dbReference>
<dbReference type="STRING" id="3702.Q84M94"/>
<dbReference type="PaxDb" id="3702-AT1G26930.1"/>
<dbReference type="ProteomicsDB" id="232063"/>
<dbReference type="EnsemblPlants" id="AT1G26930.1">
    <property type="protein sequence ID" value="AT1G26930.1"/>
    <property type="gene ID" value="AT1G26930"/>
</dbReference>
<dbReference type="GeneID" id="839583"/>
<dbReference type="Gramene" id="AT1G26930.1">
    <property type="protein sequence ID" value="AT1G26930.1"/>
    <property type="gene ID" value="AT1G26930"/>
</dbReference>
<dbReference type="KEGG" id="ath:AT1G26930"/>
<dbReference type="Araport" id="AT1G26930"/>
<dbReference type="TAIR" id="AT1G26930"/>
<dbReference type="eggNOG" id="KOG1072">
    <property type="taxonomic scope" value="Eukaryota"/>
</dbReference>
<dbReference type="HOGENOM" id="CLU_028510_0_1_1"/>
<dbReference type="InParanoid" id="Q84M94"/>
<dbReference type="OMA" id="DATPEWH"/>
<dbReference type="OrthoDB" id="191037at2759"/>
<dbReference type="PhylomeDB" id="Q84M94"/>
<dbReference type="PRO" id="PR:Q84M94"/>
<dbReference type="Proteomes" id="UP000006548">
    <property type="component" value="Chromosome 1"/>
</dbReference>
<dbReference type="ExpressionAtlas" id="Q84M94">
    <property type="expression patterns" value="baseline and differential"/>
</dbReference>
<dbReference type="GO" id="GO:0005634">
    <property type="term" value="C:nucleus"/>
    <property type="evidence" value="ECO:0000314"/>
    <property type="project" value="TAIR"/>
</dbReference>
<dbReference type="GO" id="GO:0005777">
    <property type="term" value="C:peroxisome"/>
    <property type="evidence" value="ECO:0000314"/>
    <property type="project" value="TAIR"/>
</dbReference>
<dbReference type="FunFam" id="2.120.10.80:FF:000007">
    <property type="entry name" value="F-box/kelch-repeat protein SKIP11"/>
    <property type="match status" value="1"/>
</dbReference>
<dbReference type="Gene3D" id="2.120.10.80">
    <property type="entry name" value="Kelch-type beta propeller"/>
    <property type="match status" value="1"/>
</dbReference>
<dbReference type="InterPro" id="IPR052439">
    <property type="entry name" value="F-box/Kelch-repeat"/>
</dbReference>
<dbReference type="InterPro" id="IPR015915">
    <property type="entry name" value="Kelch-typ_b-propeller"/>
</dbReference>
<dbReference type="InterPro" id="IPR006652">
    <property type="entry name" value="Kelch_1"/>
</dbReference>
<dbReference type="PANTHER" id="PTHR46122:SF12">
    <property type="entry name" value="F-BOX DOMAIN-CONTAINING PROTEIN"/>
    <property type="match status" value="1"/>
</dbReference>
<dbReference type="PANTHER" id="PTHR46122">
    <property type="entry name" value="GALACTOSE OXIDASE/KELCH REPEAT PROTEIN-RELATED"/>
    <property type="match status" value="1"/>
</dbReference>
<dbReference type="Pfam" id="PF01344">
    <property type="entry name" value="Kelch_1"/>
    <property type="match status" value="2"/>
</dbReference>
<dbReference type="SMART" id="SM00612">
    <property type="entry name" value="Kelch"/>
    <property type="match status" value="3"/>
</dbReference>
<dbReference type="SUPFAM" id="SSF117281">
    <property type="entry name" value="Kelch motif"/>
    <property type="match status" value="1"/>
</dbReference>
<dbReference type="PROSITE" id="PS00678">
    <property type="entry name" value="WD_REPEATS_1"/>
    <property type="match status" value="1"/>
</dbReference>
<sequence>MFEGRPRDSCLVSTLFTMPSHKETKWSFLVSGKRSFLNNDESDLHFKKMYKLTTDSSEGEDNGSSSDSGTLIPGMNRDDSLSCLIRCSRADYCSIASVNRSLRSLIRSGEIYRLRRLQGTLEHWVYFSCHLNEWEAFDPRSKRWMHLPSMPQNECFRYADKESLAVGTDLLVFGWEVSSYVIYRYSLLTNSWSTAKSMNMPRCLFGSASYGEIAVLAGGCDSSGRILDTAELYNYEDQTWLVLPGMNKRRKMCSGVFMDGKFYVIGGIGVGEENEPKVLTCGEEFDLKTRKWTEIPEMSPPRSNQGNGMSAAAMAPPLVAVVNDQLYAADHAGMAVRRYDKEKRVWNKVGNLPEQAGSMNGWGLAFRACGDRIIVIGGPKAPGEGFIELNSWVPSVTTPEWHLLGKKQSVNFVYNCAVMSC</sequence>
<organism>
    <name type="scientific">Arabidopsis thaliana</name>
    <name type="common">Mouse-ear cress</name>
    <dbReference type="NCBI Taxonomy" id="3702"/>
    <lineage>
        <taxon>Eukaryota</taxon>
        <taxon>Viridiplantae</taxon>
        <taxon>Streptophyta</taxon>
        <taxon>Embryophyta</taxon>
        <taxon>Tracheophyta</taxon>
        <taxon>Spermatophyta</taxon>
        <taxon>Magnoliopsida</taxon>
        <taxon>eudicotyledons</taxon>
        <taxon>Gunneridae</taxon>
        <taxon>Pentapetalae</taxon>
        <taxon>rosids</taxon>
        <taxon>malvids</taxon>
        <taxon>Brassicales</taxon>
        <taxon>Brassicaceae</taxon>
        <taxon>Camelineae</taxon>
        <taxon>Arabidopsis</taxon>
    </lineage>
</organism>
<proteinExistence type="evidence at transcript level"/>
<accession>Q84M94</accession>
<accession>Q9ZVG5</accession>
<gene>
    <name type="ordered locus">At1g26930</name>
    <name type="ORF">T2P11.12</name>
</gene>
<evidence type="ECO:0000256" key="1">
    <source>
        <dbReference type="SAM" id="MobiDB-lite"/>
    </source>
</evidence>
<evidence type="ECO:0000305" key="2"/>
<protein>
    <recommendedName>
        <fullName>F-box/kelch-repeat protein At1g26930</fullName>
    </recommendedName>
</protein>
<feature type="chain" id="PRO_0000283176" description="F-box/kelch-repeat protein At1g26930">
    <location>
        <begin position="1"/>
        <end position="421"/>
    </location>
</feature>
<feature type="domain" description="F-box">
    <location>
        <begin position="70"/>
        <end position="117"/>
    </location>
</feature>
<feature type="repeat" description="Kelch 1">
    <location>
        <begin position="114"/>
        <end position="167"/>
    </location>
</feature>
<feature type="repeat" description="Kelch 2">
    <location>
        <begin position="169"/>
        <end position="212"/>
    </location>
</feature>
<feature type="repeat" description="Kelch 3">
    <location>
        <begin position="213"/>
        <end position="260"/>
    </location>
</feature>
<feature type="repeat" description="Kelch 4">
    <location>
        <begin position="261"/>
        <end position="312"/>
    </location>
</feature>
<feature type="repeat" description="Kelch 5">
    <location>
        <begin position="320"/>
        <end position="366"/>
    </location>
</feature>
<feature type="region of interest" description="Disordered" evidence="1">
    <location>
        <begin position="54"/>
        <end position="73"/>
    </location>
</feature>